<comment type="function">
    <text evidence="1">Involved in the gluconeogenesis. Catalyzes the conversion of oxaloacetate (OAA) to phosphoenolpyruvate (PEP) through direct phosphoryl transfer between the nucleoside triphosphate and OAA.</text>
</comment>
<comment type="catalytic activity">
    <reaction evidence="1">
        <text>oxaloacetate + ATP = phosphoenolpyruvate + ADP + CO2</text>
        <dbReference type="Rhea" id="RHEA:18617"/>
        <dbReference type="ChEBI" id="CHEBI:16452"/>
        <dbReference type="ChEBI" id="CHEBI:16526"/>
        <dbReference type="ChEBI" id="CHEBI:30616"/>
        <dbReference type="ChEBI" id="CHEBI:58702"/>
        <dbReference type="ChEBI" id="CHEBI:456216"/>
        <dbReference type="EC" id="4.1.1.49"/>
    </reaction>
</comment>
<comment type="cofactor">
    <cofactor evidence="1">
        <name>Mn(2+)</name>
        <dbReference type="ChEBI" id="CHEBI:29035"/>
    </cofactor>
    <text evidence="1">Binds 1 Mn(2+) ion per subunit.</text>
</comment>
<comment type="pathway">
    <text evidence="1">Carbohydrate biosynthesis; gluconeogenesis.</text>
</comment>
<comment type="subcellular location">
    <subcellularLocation>
        <location evidence="1">Cytoplasm</location>
    </subcellularLocation>
</comment>
<comment type="similarity">
    <text evidence="1">Belongs to the phosphoenolpyruvate carboxykinase (ATP) family.</text>
</comment>
<reference key="1">
    <citation type="journal article" date="2008" name="Environ. Microbiol.">
        <title>The complete genome sequence of Moorella thermoacetica (f. Clostridium thermoaceticum).</title>
        <authorList>
            <person name="Pierce E."/>
            <person name="Xie G."/>
            <person name="Barabote R.D."/>
            <person name="Saunders E."/>
            <person name="Han C.S."/>
            <person name="Detter J.C."/>
            <person name="Richardson P."/>
            <person name="Brettin T.S."/>
            <person name="Das A."/>
            <person name="Ljungdahl L.G."/>
            <person name="Ragsdale S.W."/>
        </authorList>
    </citation>
    <scope>NUCLEOTIDE SEQUENCE [LARGE SCALE GENOMIC DNA]</scope>
    <source>
        <strain>ATCC 39073 / JCM 9320</strain>
    </source>
</reference>
<proteinExistence type="inferred from homology"/>
<accession>Q2RH96</accession>
<sequence>MGNTYGLEGLGLINPGNIYRNLPVARLVEMALARGEGVLASNGALSVRTGKYTGRSPNDRFMVDTPSVHDTISWGAVNQPLEEARFEALFRRLAAYLQGRDLFIFDGFVGADPAYRMPIRVVNQYAWQNLFVHQLFVRPSAAELEAHEPQFTVICAPGFQATPEVDGTRSEAFVVLNFDRRLIIIGGTSYAGEMKKSIFTVMNYLLPERGVCPMHCSANMGPAGDTALFFGLSGTGKTTLSADPERRLIGDDEHGWSDHGIFNFEGGCYAKCIKLSAEHEPQIWNAIRFGSVLENVAVDPDSRAIDYDCDALTENTRAAYPVDFIPNAVIPGIGGHPRTVVFLTADAFGVMPPIAKLTREQAMYHFLSGYTSKLAGTERGITDPQATFSTCFGAPFLPRSPRVYADLLGERIAKHGASVYLVNTGWTGGPSGIGRRMSLPYTRAMVRAAIKGELEGVEFVPDPVFGILVPTSCPGVPAEVLNPRHTWQDKEKYDAMARKLAGLFAENFTKFRDVPEEIRAAGPVVR</sequence>
<feature type="chain" id="PRO_0000236929" description="Phosphoenolpyruvate carboxykinase (ATP) 2">
    <location>
        <begin position="1"/>
        <end position="526"/>
    </location>
</feature>
<feature type="binding site" evidence="1">
    <location>
        <position position="55"/>
    </location>
    <ligand>
        <name>substrate</name>
    </ligand>
</feature>
<feature type="binding site" evidence="1">
    <location>
        <position position="190"/>
    </location>
    <ligand>
        <name>substrate</name>
    </ligand>
</feature>
<feature type="binding site" evidence="1">
    <location>
        <position position="196"/>
    </location>
    <ligand>
        <name>ATP</name>
        <dbReference type="ChEBI" id="CHEBI:30616"/>
    </ligand>
</feature>
<feature type="binding site" evidence="1">
    <location>
        <position position="196"/>
    </location>
    <ligand>
        <name>Mn(2+)</name>
        <dbReference type="ChEBI" id="CHEBI:29035"/>
    </ligand>
</feature>
<feature type="binding site" evidence="1">
    <location>
        <position position="196"/>
    </location>
    <ligand>
        <name>substrate</name>
    </ligand>
</feature>
<feature type="binding site" evidence="1">
    <location>
        <position position="215"/>
    </location>
    <ligand>
        <name>ATP</name>
        <dbReference type="ChEBI" id="CHEBI:30616"/>
    </ligand>
</feature>
<feature type="binding site" evidence="1">
    <location>
        <position position="215"/>
    </location>
    <ligand>
        <name>Mn(2+)</name>
        <dbReference type="ChEBI" id="CHEBI:29035"/>
    </ligand>
</feature>
<feature type="binding site" evidence="1">
    <location>
        <begin position="231"/>
        <end position="239"/>
    </location>
    <ligand>
        <name>ATP</name>
        <dbReference type="ChEBI" id="CHEBI:30616"/>
    </ligand>
</feature>
<feature type="binding site" evidence="1">
    <location>
        <position position="252"/>
    </location>
    <ligand>
        <name>Mn(2+)</name>
        <dbReference type="ChEBI" id="CHEBI:29035"/>
    </ligand>
</feature>
<feature type="binding site" evidence="1">
    <location>
        <position position="280"/>
    </location>
    <ligand>
        <name>ATP</name>
        <dbReference type="ChEBI" id="CHEBI:30616"/>
    </ligand>
</feature>
<feature type="binding site" evidence="1">
    <location>
        <position position="317"/>
    </location>
    <ligand>
        <name>ATP</name>
        <dbReference type="ChEBI" id="CHEBI:30616"/>
    </ligand>
</feature>
<feature type="binding site" evidence="1">
    <location>
        <position position="317"/>
    </location>
    <ligand>
        <name>substrate</name>
    </ligand>
</feature>
<feature type="binding site" evidence="1">
    <location>
        <position position="442"/>
    </location>
    <ligand>
        <name>ATP</name>
        <dbReference type="ChEBI" id="CHEBI:30616"/>
    </ligand>
</feature>
<organism>
    <name type="scientific">Moorella thermoacetica (strain ATCC 39073 / JCM 9320)</name>
    <dbReference type="NCBI Taxonomy" id="264732"/>
    <lineage>
        <taxon>Bacteria</taxon>
        <taxon>Bacillati</taxon>
        <taxon>Bacillota</taxon>
        <taxon>Clostridia</taxon>
        <taxon>Moorellales</taxon>
        <taxon>Moorellaceae</taxon>
        <taxon>Moorella</taxon>
    </lineage>
</organism>
<dbReference type="EC" id="4.1.1.49" evidence="1"/>
<dbReference type="EMBL" id="CP000232">
    <property type="protein sequence ID" value="ABC20193.1"/>
    <property type="molecule type" value="Genomic_DNA"/>
</dbReference>
<dbReference type="RefSeq" id="YP_430736.1">
    <property type="nucleotide sequence ID" value="NC_007644.1"/>
</dbReference>
<dbReference type="SMR" id="Q2RH96"/>
<dbReference type="STRING" id="264732.Moth_1893"/>
<dbReference type="EnsemblBacteria" id="ABC20193">
    <property type="protein sequence ID" value="ABC20193"/>
    <property type="gene ID" value="Moth_1893"/>
</dbReference>
<dbReference type="KEGG" id="mta:Moth_1893"/>
<dbReference type="PATRIC" id="fig|264732.11.peg.2050"/>
<dbReference type="eggNOG" id="COG1866">
    <property type="taxonomic scope" value="Bacteria"/>
</dbReference>
<dbReference type="HOGENOM" id="CLU_018247_0_1_9"/>
<dbReference type="OrthoDB" id="9806325at2"/>
<dbReference type="UniPathway" id="UPA00138"/>
<dbReference type="GO" id="GO:0005829">
    <property type="term" value="C:cytosol"/>
    <property type="evidence" value="ECO:0007669"/>
    <property type="project" value="TreeGrafter"/>
</dbReference>
<dbReference type="GO" id="GO:0005524">
    <property type="term" value="F:ATP binding"/>
    <property type="evidence" value="ECO:0007669"/>
    <property type="project" value="UniProtKB-UniRule"/>
</dbReference>
<dbReference type="GO" id="GO:0046872">
    <property type="term" value="F:metal ion binding"/>
    <property type="evidence" value="ECO:0007669"/>
    <property type="project" value="UniProtKB-KW"/>
</dbReference>
<dbReference type="GO" id="GO:0004612">
    <property type="term" value="F:phosphoenolpyruvate carboxykinase (ATP) activity"/>
    <property type="evidence" value="ECO:0007669"/>
    <property type="project" value="UniProtKB-UniRule"/>
</dbReference>
<dbReference type="GO" id="GO:0006094">
    <property type="term" value="P:gluconeogenesis"/>
    <property type="evidence" value="ECO:0007669"/>
    <property type="project" value="UniProtKB-UniRule"/>
</dbReference>
<dbReference type="CDD" id="cd00484">
    <property type="entry name" value="PEPCK_ATP"/>
    <property type="match status" value="1"/>
</dbReference>
<dbReference type="FunFam" id="2.170.8.10:FF:000001">
    <property type="entry name" value="Phosphoenolpyruvate carboxykinase (ATP)"/>
    <property type="match status" value="1"/>
</dbReference>
<dbReference type="Gene3D" id="3.90.228.20">
    <property type="match status" value="1"/>
</dbReference>
<dbReference type="Gene3D" id="3.40.449.10">
    <property type="entry name" value="Phosphoenolpyruvate Carboxykinase, domain 1"/>
    <property type="match status" value="1"/>
</dbReference>
<dbReference type="Gene3D" id="2.170.8.10">
    <property type="entry name" value="Phosphoenolpyruvate Carboxykinase, domain 2"/>
    <property type="match status" value="1"/>
</dbReference>
<dbReference type="HAMAP" id="MF_00453">
    <property type="entry name" value="PEPCK_ATP"/>
    <property type="match status" value="1"/>
</dbReference>
<dbReference type="InterPro" id="IPR001272">
    <property type="entry name" value="PEP_carboxykinase_ATP"/>
</dbReference>
<dbReference type="InterPro" id="IPR013035">
    <property type="entry name" value="PEP_carboxykinase_C"/>
</dbReference>
<dbReference type="InterPro" id="IPR008210">
    <property type="entry name" value="PEP_carboxykinase_N"/>
</dbReference>
<dbReference type="InterPro" id="IPR015994">
    <property type="entry name" value="PEPCK_ATP_CS"/>
</dbReference>
<dbReference type="NCBIfam" id="TIGR00224">
    <property type="entry name" value="pckA"/>
    <property type="match status" value="1"/>
</dbReference>
<dbReference type="NCBIfam" id="NF006820">
    <property type="entry name" value="PRK09344.1-2"/>
    <property type="match status" value="1"/>
</dbReference>
<dbReference type="NCBIfam" id="NF006821">
    <property type="entry name" value="PRK09344.1-3"/>
    <property type="match status" value="1"/>
</dbReference>
<dbReference type="PANTHER" id="PTHR30031:SF0">
    <property type="entry name" value="PHOSPHOENOLPYRUVATE CARBOXYKINASE (ATP)"/>
    <property type="match status" value="1"/>
</dbReference>
<dbReference type="PANTHER" id="PTHR30031">
    <property type="entry name" value="PHOSPHOENOLPYRUVATE CARBOXYKINASE ATP"/>
    <property type="match status" value="1"/>
</dbReference>
<dbReference type="Pfam" id="PF01293">
    <property type="entry name" value="PEPCK_ATP"/>
    <property type="match status" value="1"/>
</dbReference>
<dbReference type="PIRSF" id="PIRSF006294">
    <property type="entry name" value="PEP_crbxkin"/>
    <property type="match status" value="1"/>
</dbReference>
<dbReference type="SUPFAM" id="SSF68923">
    <property type="entry name" value="PEP carboxykinase N-terminal domain"/>
    <property type="match status" value="1"/>
</dbReference>
<dbReference type="SUPFAM" id="SSF53795">
    <property type="entry name" value="PEP carboxykinase-like"/>
    <property type="match status" value="1"/>
</dbReference>
<dbReference type="PROSITE" id="PS00532">
    <property type="entry name" value="PEPCK_ATP"/>
    <property type="match status" value="1"/>
</dbReference>
<name>PCKA2_MOOTA</name>
<gene>
    <name evidence="1" type="primary">pckA2</name>
    <name type="ordered locus">Moth_1893</name>
</gene>
<keyword id="KW-0067">ATP-binding</keyword>
<keyword id="KW-0963">Cytoplasm</keyword>
<keyword id="KW-0210">Decarboxylase</keyword>
<keyword id="KW-0312">Gluconeogenesis</keyword>
<keyword id="KW-0456">Lyase</keyword>
<keyword id="KW-0464">Manganese</keyword>
<keyword id="KW-0479">Metal-binding</keyword>
<keyword id="KW-0547">Nucleotide-binding</keyword>
<protein>
    <recommendedName>
        <fullName evidence="1">Phosphoenolpyruvate carboxykinase (ATP) 2</fullName>
        <shortName evidence="1">PCK 2</shortName>
        <shortName evidence="1">PEP carboxykinase 2</shortName>
        <shortName evidence="1">PEPCK 2</shortName>
        <ecNumber evidence="1">4.1.1.49</ecNumber>
    </recommendedName>
</protein>
<evidence type="ECO:0000255" key="1">
    <source>
        <dbReference type="HAMAP-Rule" id="MF_00453"/>
    </source>
</evidence>